<reference key="1">
    <citation type="journal article" date="1991" name="J. Mol. Evol.">
        <title>Phylogenetic depth of Thermotoga maritima inferred from analysis of the fus gene: amino acid sequence of elongation factor G and organization of the Thermotoga str operon.</title>
        <authorList>
            <person name="Tiboni O."/>
            <person name="Cantoni R."/>
            <person name="Creti R."/>
            <person name="Cammarano P."/>
            <person name="Sanangelantoni A.M."/>
        </authorList>
    </citation>
    <scope>NUCLEOTIDE SEQUENCE [GENOMIC DNA]</scope>
    <source>
        <strain>ATCC 43589 / DSM 3109 / JCM 10099 / NBRC 100826 / MSB8</strain>
    </source>
</reference>
<reference key="2">
    <citation type="journal article" date="1999" name="Nature">
        <title>Evidence for lateral gene transfer between Archaea and Bacteria from genome sequence of Thermotoga maritima.</title>
        <authorList>
            <person name="Nelson K.E."/>
            <person name="Clayton R.A."/>
            <person name="Gill S.R."/>
            <person name="Gwinn M.L."/>
            <person name="Dodson R.J."/>
            <person name="Haft D.H."/>
            <person name="Hickey E.K."/>
            <person name="Peterson J.D."/>
            <person name="Nelson W.C."/>
            <person name="Ketchum K.A."/>
            <person name="McDonald L.A."/>
            <person name="Utterback T.R."/>
            <person name="Malek J.A."/>
            <person name="Linher K.D."/>
            <person name="Garrett M.M."/>
            <person name="Stewart A.M."/>
            <person name="Cotton M.D."/>
            <person name="Pratt M.S."/>
            <person name="Phillips C.A."/>
            <person name="Richardson D.L."/>
            <person name="Heidelberg J.F."/>
            <person name="Sutton G.G."/>
            <person name="Fleischmann R.D."/>
            <person name="Eisen J.A."/>
            <person name="White O."/>
            <person name="Salzberg S.L."/>
            <person name="Smith H.O."/>
            <person name="Venter J.C."/>
            <person name="Fraser C.M."/>
        </authorList>
    </citation>
    <scope>NUCLEOTIDE SEQUENCE [LARGE SCALE GENOMIC DNA]</scope>
    <source>
        <strain>ATCC 43589 / DSM 3109 / JCM 10099 / NBRC 100826 / MSB8</strain>
    </source>
</reference>
<proteinExistence type="inferred from homology"/>
<dbReference type="EMBL" id="S57688">
    <property type="protein sequence ID" value="AAB19927.2"/>
    <property type="status" value="ALT_INIT"/>
    <property type="molecule type" value="Genomic_DNA"/>
</dbReference>
<dbReference type="EMBL" id="AE000512">
    <property type="protein sequence ID" value="AAD36570.1"/>
    <property type="status" value="ALT_INIT"/>
    <property type="molecule type" value="Genomic_DNA"/>
</dbReference>
<dbReference type="PIR" id="H72243">
    <property type="entry name" value="H72243"/>
</dbReference>
<dbReference type="RefSeq" id="NP_229303.1">
    <property type="nucleotide sequence ID" value="NC_000853.1"/>
</dbReference>
<dbReference type="SMR" id="P38525"/>
<dbReference type="FunCoup" id="P38525">
    <property type="interactions" value="405"/>
</dbReference>
<dbReference type="STRING" id="243274.TM_1503"/>
<dbReference type="PaxDb" id="243274-THEMA_06785"/>
<dbReference type="EnsemblBacteria" id="AAD36570">
    <property type="protein sequence ID" value="AAD36570"/>
    <property type="gene ID" value="TM_1503"/>
</dbReference>
<dbReference type="KEGG" id="tma:TM1503"/>
<dbReference type="eggNOG" id="COG0480">
    <property type="taxonomic scope" value="Bacteria"/>
</dbReference>
<dbReference type="InParanoid" id="P38525"/>
<dbReference type="OrthoDB" id="9804431at2"/>
<dbReference type="Proteomes" id="UP000008183">
    <property type="component" value="Chromosome"/>
</dbReference>
<dbReference type="GO" id="GO:0005737">
    <property type="term" value="C:cytoplasm"/>
    <property type="evidence" value="ECO:0007669"/>
    <property type="project" value="UniProtKB-SubCell"/>
</dbReference>
<dbReference type="GO" id="GO:0005525">
    <property type="term" value="F:GTP binding"/>
    <property type="evidence" value="ECO:0007669"/>
    <property type="project" value="UniProtKB-UniRule"/>
</dbReference>
<dbReference type="GO" id="GO:0003924">
    <property type="term" value="F:GTPase activity"/>
    <property type="evidence" value="ECO:0007669"/>
    <property type="project" value="InterPro"/>
</dbReference>
<dbReference type="GO" id="GO:0003746">
    <property type="term" value="F:translation elongation factor activity"/>
    <property type="evidence" value="ECO:0007669"/>
    <property type="project" value="UniProtKB-UniRule"/>
</dbReference>
<dbReference type="GO" id="GO:0032790">
    <property type="term" value="P:ribosome disassembly"/>
    <property type="evidence" value="ECO:0000318"/>
    <property type="project" value="GO_Central"/>
</dbReference>
<dbReference type="CDD" id="cd01886">
    <property type="entry name" value="EF-G"/>
    <property type="match status" value="1"/>
</dbReference>
<dbReference type="CDD" id="cd16262">
    <property type="entry name" value="EFG_III"/>
    <property type="match status" value="1"/>
</dbReference>
<dbReference type="CDD" id="cd01434">
    <property type="entry name" value="EFG_mtEFG1_IV"/>
    <property type="match status" value="1"/>
</dbReference>
<dbReference type="CDD" id="cd03713">
    <property type="entry name" value="EFG_mtEFG_C"/>
    <property type="match status" value="1"/>
</dbReference>
<dbReference type="CDD" id="cd04088">
    <property type="entry name" value="EFG_mtEFG_II"/>
    <property type="match status" value="1"/>
</dbReference>
<dbReference type="FunFam" id="2.40.30.10:FF:000006">
    <property type="entry name" value="Elongation factor G"/>
    <property type="match status" value="1"/>
</dbReference>
<dbReference type="FunFam" id="3.30.230.10:FF:000003">
    <property type="entry name" value="Elongation factor G"/>
    <property type="match status" value="1"/>
</dbReference>
<dbReference type="FunFam" id="3.30.70.240:FF:000001">
    <property type="entry name" value="Elongation factor G"/>
    <property type="match status" value="1"/>
</dbReference>
<dbReference type="FunFam" id="3.30.70.870:FF:000001">
    <property type="entry name" value="Elongation factor G"/>
    <property type="match status" value="1"/>
</dbReference>
<dbReference type="FunFam" id="3.40.50.300:FF:000029">
    <property type="entry name" value="Elongation factor G"/>
    <property type="match status" value="1"/>
</dbReference>
<dbReference type="Gene3D" id="3.30.230.10">
    <property type="match status" value="1"/>
</dbReference>
<dbReference type="Gene3D" id="3.30.70.240">
    <property type="match status" value="1"/>
</dbReference>
<dbReference type="Gene3D" id="3.30.70.870">
    <property type="entry name" value="Elongation Factor G (Translational Gtpase), domain 3"/>
    <property type="match status" value="1"/>
</dbReference>
<dbReference type="Gene3D" id="3.40.50.300">
    <property type="entry name" value="P-loop containing nucleotide triphosphate hydrolases"/>
    <property type="match status" value="1"/>
</dbReference>
<dbReference type="Gene3D" id="2.40.30.10">
    <property type="entry name" value="Translation factors"/>
    <property type="match status" value="1"/>
</dbReference>
<dbReference type="HAMAP" id="MF_00054_B">
    <property type="entry name" value="EF_G_EF_2_B"/>
    <property type="match status" value="1"/>
</dbReference>
<dbReference type="InterPro" id="IPR053905">
    <property type="entry name" value="EF-G-like_DII"/>
</dbReference>
<dbReference type="InterPro" id="IPR041095">
    <property type="entry name" value="EFG_II"/>
</dbReference>
<dbReference type="InterPro" id="IPR009022">
    <property type="entry name" value="EFG_III"/>
</dbReference>
<dbReference type="InterPro" id="IPR035647">
    <property type="entry name" value="EFG_III/V"/>
</dbReference>
<dbReference type="InterPro" id="IPR047872">
    <property type="entry name" value="EFG_IV"/>
</dbReference>
<dbReference type="InterPro" id="IPR035649">
    <property type="entry name" value="EFG_V"/>
</dbReference>
<dbReference type="InterPro" id="IPR000640">
    <property type="entry name" value="EFG_V-like"/>
</dbReference>
<dbReference type="InterPro" id="IPR031157">
    <property type="entry name" value="G_TR_CS"/>
</dbReference>
<dbReference type="InterPro" id="IPR027417">
    <property type="entry name" value="P-loop_NTPase"/>
</dbReference>
<dbReference type="InterPro" id="IPR020568">
    <property type="entry name" value="Ribosomal_Su5_D2-typ_SF"/>
</dbReference>
<dbReference type="InterPro" id="IPR014721">
    <property type="entry name" value="Ribsml_uS5_D2-typ_fold_subgr"/>
</dbReference>
<dbReference type="InterPro" id="IPR005225">
    <property type="entry name" value="Small_GTP-bd"/>
</dbReference>
<dbReference type="InterPro" id="IPR000795">
    <property type="entry name" value="T_Tr_GTP-bd_dom"/>
</dbReference>
<dbReference type="InterPro" id="IPR009000">
    <property type="entry name" value="Transl_B-barrel_sf"/>
</dbReference>
<dbReference type="InterPro" id="IPR004540">
    <property type="entry name" value="Transl_elong_EFG/EF2"/>
</dbReference>
<dbReference type="InterPro" id="IPR005517">
    <property type="entry name" value="Transl_elong_EFG/EF2_IV"/>
</dbReference>
<dbReference type="NCBIfam" id="TIGR00484">
    <property type="entry name" value="EF-G"/>
    <property type="match status" value="1"/>
</dbReference>
<dbReference type="NCBIfam" id="NF009379">
    <property type="entry name" value="PRK12740.1-3"/>
    <property type="match status" value="1"/>
</dbReference>
<dbReference type="NCBIfam" id="NF009381">
    <property type="entry name" value="PRK12740.1-5"/>
    <property type="match status" value="1"/>
</dbReference>
<dbReference type="NCBIfam" id="NF009891">
    <property type="entry name" value="PRK13351.1-1"/>
    <property type="match status" value="1"/>
</dbReference>
<dbReference type="NCBIfam" id="TIGR00231">
    <property type="entry name" value="small_GTP"/>
    <property type="match status" value="1"/>
</dbReference>
<dbReference type="PANTHER" id="PTHR43261:SF1">
    <property type="entry name" value="RIBOSOME-RELEASING FACTOR 2, MITOCHONDRIAL"/>
    <property type="match status" value="1"/>
</dbReference>
<dbReference type="PANTHER" id="PTHR43261">
    <property type="entry name" value="TRANSLATION ELONGATION FACTOR G-RELATED"/>
    <property type="match status" value="1"/>
</dbReference>
<dbReference type="Pfam" id="PF22042">
    <property type="entry name" value="EF-G_D2"/>
    <property type="match status" value="1"/>
</dbReference>
<dbReference type="Pfam" id="PF00679">
    <property type="entry name" value="EFG_C"/>
    <property type="match status" value="1"/>
</dbReference>
<dbReference type="Pfam" id="PF14492">
    <property type="entry name" value="EFG_III"/>
    <property type="match status" value="1"/>
</dbReference>
<dbReference type="Pfam" id="PF03764">
    <property type="entry name" value="EFG_IV"/>
    <property type="match status" value="1"/>
</dbReference>
<dbReference type="Pfam" id="PF00009">
    <property type="entry name" value="GTP_EFTU"/>
    <property type="match status" value="1"/>
</dbReference>
<dbReference type="PRINTS" id="PR00315">
    <property type="entry name" value="ELONGATNFCT"/>
</dbReference>
<dbReference type="SMART" id="SM00838">
    <property type="entry name" value="EFG_C"/>
    <property type="match status" value="1"/>
</dbReference>
<dbReference type="SMART" id="SM00889">
    <property type="entry name" value="EFG_IV"/>
    <property type="match status" value="1"/>
</dbReference>
<dbReference type="SUPFAM" id="SSF54980">
    <property type="entry name" value="EF-G C-terminal domain-like"/>
    <property type="match status" value="2"/>
</dbReference>
<dbReference type="SUPFAM" id="SSF52540">
    <property type="entry name" value="P-loop containing nucleoside triphosphate hydrolases"/>
    <property type="match status" value="1"/>
</dbReference>
<dbReference type="SUPFAM" id="SSF54211">
    <property type="entry name" value="Ribosomal protein S5 domain 2-like"/>
    <property type="match status" value="1"/>
</dbReference>
<dbReference type="SUPFAM" id="SSF50447">
    <property type="entry name" value="Translation proteins"/>
    <property type="match status" value="1"/>
</dbReference>
<dbReference type="PROSITE" id="PS00301">
    <property type="entry name" value="G_TR_1"/>
    <property type="match status" value="1"/>
</dbReference>
<dbReference type="PROSITE" id="PS51722">
    <property type="entry name" value="G_TR_2"/>
    <property type="match status" value="1"/>
</dbReference>
<keyword id="KW-0963">Cytoplasm</keyword>
<keyword id="KW-0251">Elongation factor</keyword>
<keyword id="KW-0342">GTP-binding</keyword>
<keyword id="KW-0547">Nucleotide-binding</keyword>
<keyword id="KW-0648">Protein biosynthesis</keyword>
<keyword id="KW-1185">Reference proteome</keyword>
<sequence>MEARYVDLDKLRNIGIMAHIDAGKTTTTERILYYTGRKHFIGDVDEGNTTTDWMPQEKERGITIQSAATTCFWKGYRINIIDTPGHVDFTAEVERALRVLDGAIAVFDATAGVEPQSETVWRQADKYNVPRIAFMNKMDKVGADFYMAVETLVTKLRANPIPVQMPIGSEKDFQGVIDLIKMKAIYWVSEDGSVYEERDIPEELREEAEMRREEMLEKIAELDEEILEKYLEGEEISEEEIKRVLRKATIENKAVPVLCGAAKANKGIQPLLDAVIDYLPSPLDLPPVKGWRVSDGEVVYRKPDENEPFTALVFKVQVDPYIGKLVYFRVYSGRLEKGSYVYNSTKGQRERISRIVFMHADKREEVDYVRPGDIAAGVGLKVSQTGDTLCDEKEPIILEKIDFPEPVISLAVEPVTKADEEKLVKALLALSEEDPTLQVRVDKETGETIISGMGELHLEIVVDRLKREFGVNVRVGQPQVAYRETIKKSAEAEGKYIRQTGGRGQYGHVILRIEPIPEEEGKNFEFIDKTVGGVIPKEFMPAIEAGIKEAMMAGPLAGYPVVRVRAIVLDGSYHEVDSSEMAFKIAASMAFKEAMKKAQPVLLEPIMKLEITTPEEYMGNIISDLNSRRAKVESLETRGHLKVIVAKVPLSETFGYATVLRSLSQGRASYIMQFSHYQEVPEKIAEKIIKVV</sequence>
<organism>
    <name type="scientific">Thermotoga maritima (strain ATCC 43589 / DSM 3109 / JCM 10099 / NBRC 100826 / MSB8)</name>
    <dbReference type="NCBI Taxonomy" id="243274"/>
    <lineage>
        <taxon>Bacteria</taxon>
        <taxon>Thermotogati</taxon>
        <taxon>Thermotogota</taxon>
        <taxon>Thermotogae</taxon>
        <taxon>Thermotogales</taxon>
        <taxon>Thermotogaceae</taxon>
        <taxon>Thermotoga</taxon>
    </lineage>
</organism>
<comment type="function">
    <text evidence="1">Catalyzes the GTP-dependent ribosomal translocation step during translation elongation. During this step, the ribosome changes from the pre-translocational (PRE) to the post-translocational (POST) state as the newly formed A-site-bound peptidyl-tRNA and P-site-bound deacylated tRNA move to the P and E sites, respectively. Catalyzes the coordinated movement of the two tRNA molecules, the mRNA and conformational changes in the ribosome (By similarity).</text>
</comment>
<comment type="subcellular location">
    <subcellularLocation>
        <location evidence="1">Cytoplasm</location>
    </subcellularLocation>
</comment>
<comment type="similarity">
    <text evidence="2">Belongs to the TRAFAC class translation factor GTPase superfamily. Classic translation factor GTPase family. EF-G/EF-2 subfamily.</text>
</comment>
<comment type="sequence caution" evidence="2">
    <conflict type="erroneous initiation">
        <sequence resource="EMBL-CDS" id="AAB19927"/>
    </conflict>
</comment>
<comment type="sequence caution" evidence="2">
    <conflict type="erroneous initiation">
        <sequence resource="EMBL-CDS" id="AAD36570"/>
    </conflict>
</comment>
<protein>
    <recommendedName>
        <fullName>Elongation factor G</fullName>
        <shortName>EF-G</shortName>
    </recommendedName>
</protein>
<accession>P38525</accession>
<evidence type="ECO:0000250" key="1"/>
<evidence type="ECO:0000305" key="2"/>
<gene>
    <name type="primary">fusA</name>
    <name type="synonym">fus</name>
    <name type="ordered locus">TM_1503</name>
</gene>
<name>EFG_THEMA</name>
<feature type="chain" id="PRO_0000091246" description="Elongation factor G">
    <location>
        <begin position="1"/>
        <end position="692"/>
    </location>
</feature>
<feature type="domain" description="tr-type G">
    <location>
        <begin position="9"/>
        <end position="283"/>
    </location>
</feature>
<feature type="binding site" evidence="1">
    <location>
        <begin position="18"/>
        <end position="25"/>
    </location>
    <ligand>
        <name>GTP</name>
        <dbReference type="ChEBI" id="CHEBI:37565"/>
    </ligand>
</feature>
<feature type="binding site" evidence="1">
    <location>
        <begin position="82"/>
        <end position="86"/>
    </location>
    <ligand>
        <name>GTP</name>
        <dbReference type="ChEBI" id="CHEBI:37565"/>
    </ligand>
</feature>
<feature type="binding site" evidence="1">
    <location>
        <begin position="136"/>
        <end position="139"/>
    </location>
    <ligand>
        <name>GTP</name>
        <dbReference type="ChEBI" id="CHEBI:37565"/>
    </ligand>
</feature>
<feature type="sequence conflict" description="In Ref. 1; AAB19927." evidence="2" ref="1">
    <original>A</original>
    <variation>R</variation>
    <location>
        <position position="105"/>
    </location>
</feature>
<feature type="sequence conflict" description="In Ref. 1; AAB19927." evidence="2" ref="1">
    <original>E</original>
    <variation>A</variation>
    <location>
        <position position="234"/>
    </location>
</feature>
<feature type="sequence conflict" description="In Ref. 1; AAB19927." evidence="2" ref="1">
    <original>V</original>
    <variation>F</variation>
    <location>
        <position position="369"/>
    </location>
</feature>
<feature type="sequence conflict" description="In Ref. 1; AAB19927." evidence="2" ref="1">
    <original>CD</original>
    <variation>WH</variation>
    <location>
        <begin position="390"/>
        <end position="391"/>
    </location>
</feature>
<feature type="sequence conflict" description="In Ref. 1; AAB19927." evidence="2" ref="1">
    <original>T</original>
    <variation>N</variation>
    <location>
        <position position="448"/>
    </location>
</feature>
<feature type="sequence conflict" description="In Ref. 1." evidence="2" ref="1">
    <location>
        <begin position="527"/>
        <end position="539"/>
    </location>
</feature>